<evidence type="ECO:0000255" key="1">
    <source>
        <dbReference type="HAMAP-Rule" id="MF_01560"/>
    </source>
</evidence>
<name>Y1470_BACVZ</name>
<comment type="similarity">
    <text evidence="1">Belongs to the UPF0358 family.</text>
</comment>
<reference key="1">
    <citation type="journal article" date="2007" name="Nat. Biotechnol.">
        <title>Comparative analysis of the complete genome sequence of the plant growth-promoting bacterium Bacillus amyloliquefaciens FZB42.</title>
        <authorList>
            <person name="Chen X.H."/>
            <person name="Koumoutsi A."/>
            <person name="Scholz R."/>
            <person name="Eisenreich A."/>
            <person name="Schneider K."/>
            <person name="Heinemeyer I."/>
            <person name="Morgenstern B."/>
            <person name="Voss B."/>
            <person name="Hess W.R."/>
            <person name="Reva O."/>
            <person name="Junge H."/>
            <person name="Voigt B."/>
            <person name="Jungblut P.R."/>
            <person name="Vater J."/>
            <person name="Suessmuth R."/>
            <person name="Liesegang H."/>
            <person name="Strittmatter A."/>
            <person name="Gottschalk G."/>
            <person name="Borriss R."/>
        </authorList>
    </citation>
    <scope>NUCLEOTIDE SEQUENCE [LARGE SCALE GENOMIC DNA]</scope>
    <source>
        <strain>DSM 23117 / BGSC 10A6 / LMG 26770 / FZB42</strain>
    </source>
</reference>
<organism>
    <name type="scientific">Bacillus velezensis (strain DSM 23117 / BGSC 10A6 / LMG 26770 / FZB42)</name>
    <name type="common">Bacillus amyloliquefaciens subsp. plantarum</name>
    <dbReference type="NCBI Taxonomy" id="326423"/>
    <lineage>
        <taxon>Bacteria</taxon>
        <taxon>Bacillati</taxon>
        <taxon>Bacillota</taxon>
        <taxon>Bacilli</taxon>
        <taxon>Bacillales</taxon>
        <taxon>Bacillaceae</taxon>
        <taxon>Bacillus</taxon>
        <taxon>Bacillus amyloliquefaciens group</taxon>
    </lineage>
</organism>
<protein>
    <recommendedName>
        <fullName evidence="1">UPF0358 protein RBAM_014700</fullName>
    </recommendedName>
</protein>
<sequence>MASEIIVDHQQKAFELLKLDAEKILKLIRVQMDNLTMPQCPLYEEVLDTQMFGLSREIDFAVRLGLVDENDGKELLDRLERELSALHDAFTGK</sequence>
<accession>A7Z4A7</accession>
<feature type="chain" id="PRO_1000087801" description="UPF0358 protein RBAM_014700">
    <location>
        <begin position="1"/>
        <end position="93"/>
    </location>
</feature>
<proteinExistence type="inferred from homology"/>
<gene>
    <name type="ordered locus">RBAM_014700</name>
</gene>
<dbReference type="EMBL" id="CP000560">
    <property type="protein sequence ID" value="ABS73833.1"/>
    <property type="molecule type" value="Genomic_DNA"/>
</dbReference>
<dbReference type="RefSeq" id="WP_003154494.1">
    <property type="nucleotide sequence ID" value="NC_009725.2"/>
</dbReference>
<dbReference type="SMR" id="A7Z4A7"/>
<dbReference type="GeneID" id="93080603"/>
<dbReference type="KEGG" id="bay:RBAM_014700"/>
<dbReference type="HOGENOM" id="CLU_160493_1_0_9"/>
<dbReference type="Proteomes" id="UP000001120">
    <property type="component" value="Chromosome"/>
</dbReference>
<dbReference type="Gene3D" id="1.10.287.750">
    <property type="entry name" value="SO2669-like"/>
    <property type="match status" value="1"/>
</dbReference>
<dbReference type="HAMAP" id="MF_01560">
    <property type="entry name" value="UPF0358"/>
    <property type="match status" value="1"/>
</dbReference>
<dbReference type="InterPro" id="IPR009983">
    <property type="entry name" value="UPF0358"/>
</dbReference>
<dbReference type="InterPro" id="IPR036270">
    <property type="entry name" value="UPF0358_sf"/>
</dbReference>
<dbReference type="NCBIfam" id="NF010187">
    <property type="entry name" value="PRK13666.1"/>
    <property type="match status" value="1"/>
</dbReference>
<dbReference type="Pfam" id="PF07408">
    <property type="entry name" value="DUF1507"/>
    <property type="match status" value="1"/>
</dbReference>
<dbReference type="SUPFAM" id="SSF140404">
    <property type="entry name" value="EF2458-like"/>
    <property type="match status" value="1"/>
</dbReference>